<protein>
    <recommendedName>
        <fullName evidence="1">Thymidylate synthase</fullName>
        <shortName evidence="1">TS</shortName>
        <shortName evidence="1">TSase</shortName>
        <ecNumber evidence="1">2.1.1.45</ecNumber>
    </recommendedName>
</protein>
<accession>P67049</accession>
<accession>Q97RW7</accession>
<gene>
    <name evidence="1" type="primary">thyA</name>
    <name type="ordered locus">SP_0669</name>
</gene>
<organism>
    <name type="scientific">Streptococcus pneumoniae serotype 4 (strain ATCC BAA-334 / TIGR4)</name>
    <dbReference type="NCBI Taxonomy" id="170187"/>
    <lineage>
        <taxon>Bacteria</taxon>
        <taxon>Bacillati</taxon>
        <taxon>Bacillota</taxon>
        <taxon>Bacilli</taxon>
        <taxon>Lactobacillales</taxon>
        <taxon>Streptococcaceae</taxon>
        <taxon>Streptococcus</taxon>
    </lineage>
</organism>
<reference key="1">
    <citation type="journal article" date="2001" name="Science">
        <title>Complete genome sequence of a virulent isolate of Streptococcus pneumoniae.</title>
        <authorList>
            <person name="Tettelin H."/>
            <person name="Nelson K.E."/>
            <person name="Paulsen I.T."/>
            <person name="Eisen J.A."/>
            <person name="Read T.D."/>
            <person name="Peterson S.N."/>
            <person name="Heidelberg J.F."/>
            <person name="DeBoy R.T."/>
            <person name="Haft D.H."/>
            <person name="Dodson R.J."/>
            <person name="Durkin A.S."/>
            <person name="Gwinn M.L."/>
            <person name="Kolonay J.F."/>
            <person name="Nelson W.C."/>
            <person name="Peterson J.D."/>
            <person name="Umayam L.A."/>
            <person name="White O."/>
            <person name="Salzberg S.L."/>
            <person name="Lewis M.R."/>
            <person name="Radune D."/>
            <person name="Holtzapple E.K."/>
            <person name="Khouri H.M."/>
            <person name="Wolf A.M."/>
            <person name="Utterback T.R."/>
            <person name="Hansen C.L."/>
            <person name="McDonald L.A."/>
            <person name="Feldblyum T.V."/>
            <person name="Angiuoli S.V."/>
            <person name="Dickinson T."/>
            <person name="Hickey E.K."/>
            <person name="Holt I.E."/>
            <person name="Loftus B.J."/>
            <person name="Yang F."/>
            <person name="Smith H.O."/>
            <person name="Venter J.C."/>
            <person name="Dougherty B.A."/>
            <person name="Morrison D.A."/>
            <person name="Hollingshead S.K."/>
            <person name="Fraser C.M."/>
        </authorList>
    </citation>
    <scope>NUCLEOTIDE SEQUENCE [LARGE SCALE GENOMIC DNA]</scope>
    <source>
        <strain>ATCC BAA-334 / TIGR4</strain>
    </source>
</reference>
<evidence type="ECO:0000255" key="1">
    <source>
        <dbReference type="HAMAP-Rule" id="MF_00008"/>
    </source>
</evidence>
<feature type="chain" id="PRO_0000141030" description="Thymidylate synthase">
    <location>
        <begin position="1"/>
        <end position="279"/>
    </location>
</feature>
<feature type="active site" description="Nucleophile" evidence="1">
    <location>
        <position position="154"/>
    </location>
</feature>
<feature type="binding site" evidence="1">
    <location>
        <begin position="133"/>
        <end position="134"/>
    </location>
    <ligand>
        <name>dUMP</name>
        <dbReference type="ChEBI" id="CHEBI:246422"/>
        <note>ligand shared between dimeric partners</note>
    </ligand>
</feature>
<feature type="binding site" description="in other chain" evidence="1">
    <location>
        <begin position="178"/>
        <end position="181"/>
    </location>
    <ligand>
        <name>dUMP</name>
        <dbReference type="ChEBI" id="CHEBI:246422"/>
        <note>ligand shared between dimeric partners</note>
    </ligand>
</feature>
<feature type="binding site" evidence="1">
    <location>
        <position position="181"/>
    </location>
    <ligand>
        <name>(6R)-5,10-methylene-5,6,7,8-tetrahydrofolate</name>
        <dbReference type="ChEBI" id="CHEBI:15636"/>
    </ligand>
</feature>
<feature type="binding site" description="in other chain" evidence="1">
    <location>
        <position position="189"/>
    </location>
    <ligand>
        <name>dUMP</name>
        <dbReference type="ChEBI" id="CHEBI:246422"/>
        <note>ligand shared between dimeric partners</note>
    </ligand>
</feature>
<feature type="binding site" description="in other chain" evidence="1">
    <location>
        <begin position="219"/>
        <end position="221"/>
    </location>
    <ligand>
        <name>dUMP</name>
        <dbReference type="ChEBI" id="CHEBI:246422"/>
        <note>ligand shared between dimeric partners</note>
    </ligand>
</feature>
<feature type="binding site" evidence="1">
    <location>
        <position position="278"/>
    </location>
    <ligand>
        <name>(6R)-5,10-methylene-5,6,7,8-tetrahydrofolate</name>
        <dbReference type="ChEBI" id="CHEBI:15636"/>
    </ligand>
</feature>
<name>TYSY_STRPN</name>
<sequence>MTKADTIFKENIERILKEGVFSEQARPKYKDGTVANSKYVTGAFSEYDLSKGEFPITTLRPIAIKSAIKEVLWIYQDQSNSLEVLNDKYNVHYWNDWEVGDTGTIGERYGAVVKKHDIINKLLKQLETNPWNRRNIISLWDYQAFEETDGLLPCAFQTMFDVRRVDGEIYLDATLTQRSNDMLVAHHINAMQYVALQMMIAKHFGWKVGKFFYFINNLHIYDNQFEQAQELLRREPSNCQPRLVLNVPDGTNFFDIKAEDFELVDYDPVKPQLKFDLAI</sequence>
<dbReference type="EC" id="2.1.1.45" evidence="1"/>
<dbReference type="EMBL" id="AE005672">
    <property type="protein sequence ID" value="AAK74814.1"/>
    <property type="molecule type" value="Genomic_DNA"/>
</dbReference>
<dbReference type="PIR" id="E95077">
    <property type="entry name" value="E95077"/>
</dbReference>
<dbReference type="RefSeq" id="WP_000158639.1">
    <property type="nucleotide sequence ID" value="NZ_CP155539.1"/>
</dbReference>
<dbReference type="SMR" id="P67049"/>
<dbReference type="IntAct" id="P67049">
    <property type="interactions" value="3"/>
</dbReference>
<dbReference type="PaxDb" id="170187-SP_0669"/>
<dbReference type="EnsemblBacteria" id="AAK74814">
    <property type="protein sequence ID" value="AAK74814"/>
    <property type="gene ID" value="SP_0669"/>
</dbReference>
<dbReference type="KEGG" id="spn:SP_0669"/>
<dbReference type="eggNOG" id="COG0207">
    <property type="taxonomic scope" value="Bacteria"/>
</dbReference>
<dbReference type="PhylomeDB" id="P67049"/>
<dbReference type="BioCyc" id="SPNE170187:G1FZB-692-MONOMER"/>
<dbReference type="UniPathway" id="UPA00575"/>
<dbReference type="Proteomes" id="UP000000585">
    <property type="component" value="Chromosome"/>
</dbReference>
<dbReference type="GO" id="GO:0005829">
    <property type="term" value="C:cytosol"/>
    <property type="evidence" value="ECO:0007669"/>
    <property type="project" value="TreeGrafter"/>
</dbReference>
<dbReference type="GO" id="GO:0004799">
    <property type="term" value="F:thymidylate synthase activity"/>
    <property type="evidence" value="ECO:0007669"/>
    <property type="project" value="UniProtKB-UniRule"/>
</dbReference>
<dbReference type="GO" id="GO:0006231">
    <property type="term" value="P:dTMP biosynthetic process"/>
    <property type="evidence" value="ECO:0007669"/>
    <property type="project" value="UniProtKB-UniRule"/>
</dbReference>
<dbReference type="GO" id="GO:0006235">
    <property type="term" value="P:dTTP biosynthetic process"/>
    <property type="evidence" value="ECO:0007669"/>
    <property type="project" value="UniProtKB-UniRule"/>
</dbReference>
<dbReference type="GO" id="GO:0032259">
    <property type="term" value="P:methylation"/>
    <property type="evidence" value="ECO:0007669"/>
    <property type="project" value="UniProtKB-KW"/>
</dbReference>
<dbReference type="CDD" id="cd00351">
    <property type="entry name" value="TS_Pyrimidine_HMase"/>
    <property type="match status" value="1"/>
</dbReference>
<dbReference type="FunFam" id="3.30.572.10:FF:000006">
    <property type="entry name" value="Thymidylate synthase"/>
    <property type="match status" value="1"/>
</dbReference>
<dbReference type="Gene3D" id="3.30.572.10">
    <property type="entry name" value="Thymidylate synthase/dCMP hydroxymethylase domain"/>
    <property type="match status" value="1"/>
</dbReference>
<dbReference type="HAMAP" id="MF_00008">
    <property type="entry name" value="Thymidy_synth_bact"/>
    <property type="match status" value="1"/>
</dbReference>
<dbReference type="InterPro" id="IPR045097">
    <property type="entry name" value="Thymidate_synth/dCMP_Mease"/>
</dbReference>
<dbReference type="InterPro" id="IPR023451">
    <property type="entry name" value="Thymidate_synth/dCMP_Mease_dom"/>
</dbReference>
<dbReference type="InterPro" id="IPR036926">
    <property type="entry name" value="Thymidate_synth/dCMP_Mease_sf"/>
</dbReference>
<dbReference type="InterPro" id="IPR000398">
    <property type="entry name" value="Thymidylate_synthase"/>
</dbReference>
<dbReference type="InterPro" id="IPR020940">
    <property type="entry name" value="Thymidylate_synthase_AS"/>
</dbReference>
<dbReference type="NCBIfam" id="NF002495">
    <property type="entry name" value="PRK01827.1-1"/>
    <property type="match status" value="1"/>
</dbReference>
<dbReference type="PANTHER" id="PTHR11548">
    <property type="entry name" value="THYMIDYLATE SYNTHASE 1"/>
    <property type="match status" value="1"/>
</dbReference>
<dbReference type="PANTHER" id="PTHR11548:SF1">
    <property type="entry name" value="THYMIDYLATE SYNTHASE 1"/>
    <property type="match status" value="1"/>
</dbReference>
<dbReference type="Pfam" id="PF00303">
    <property type="entry name" value="Thymidylat_synt"/>
    <property type="match status" value="1"/>
</dbReference>
<dbReference type="PRINTS" id="PR00108">
    <property type="entry name" value="THYMDSNTHASE"/>
</dbReference>
<dbReference type="SUPFAM" id="SSF55831">
    <property type="entry name" value="Thymidylate synthase/dCMP hydroxymethylase"/>
    <property type="match status" value="1"/>
</dbReference>
<dbReference type="PROSITE" id="PS00091">
    <property type="entry name" value="THYMIDYLATE_SYNTHASE"/>
    <property type="match status" value="1"/>
</dbReference>
<keyword id="KW-0963">Cytoplasm</keyword>
<keyword id="KW-0489">Methyltransferase</keyword>
<keyword id="KW-0545">Nucleotide biosynthesis</keyword>
<keyword id="KW-1185">Reference proteome</keyword>
<keyword id="KW-0808">Transferase</keyword>
<comment type="function">
    <text evidence="1">Catalyzes the reductive methylation of 2'-deoxyuridine-5'-monophosphate (dUMP) to 2'-deoxythymidine-5'-monophosphate (dTMP) while utilizing 5,10-methylenetetrahydrofolate (mTHF) as the methyl donor and reductant in the reaction, yielding dihydrofolate (DHF) as a by-product. This enzymatic reaction provides an intracellular de novo source of dTMP, an essential precursor for DNA biosynthesis.</text>
</comment>
<comment type="catalytic activity">
    <reaction evidence="1">
        <text>dUMP + (6R)-5,10-methylene-5,6,7,8-tetrahydrofolate = 7,8-dihydrofolate + dTMP</text>
        <dbReference type="Rhea" id="RHEA:12104"/>
        <dbReference type="ChEBI" id="CHEBI:15636"/>
        <dbReference type="ChEBI" id="CHEBI:57451"/>
        <dbReference type="ChEBI" id="CHEBI:63528"/>
        <dbReference type="ChEBI" id="CHEBI:246422"/>
        <dbReference type="EC" id="2.1.1.45"/>
    </reaction>
</comment>
<comment type="pathway">
    <text evidence="1">Pyrimidine metabolism; dTTP biosynthesis.</text>
</comment>
<comment type="subunit">
    <text evidence="1">Homodimer.</text>
</comment>
<comment type="interaction">
    <interactant intactId="EBI-2207093">
        <id>P67049</id>
    </interactant>
    <interactant intactId="EBI-2207053">
        <id>Q97SE5</id>
        <label>gatC</label>
    </interactant>
    <organismsDiffer>false</organismsDiffer>
    <experiments>2</experiments>
</comment>
<comment type="interaction">
    <interactant intactId="EBI-2207093">
        <id>P67049</id>
    </interactant>
    <interactant intactId="EBI-2206949">
        <id>Q97NV3</id>
        <label>groES</label>
    </interactant>
    <organismsDiffer>false</organismsDiffer>
    <experiments>2</experiments>
</comment>
<comment type="interaction">
    <interactant intactId="EBI-2207093">
        <id>P67049</id>
    </interactant>
    <interactant intactId="EBI-2207382">
        <id>P0A4S9</id>
        <label>SP_1877</label>
    </interactant>
    <organismsDiffer>false</organismsDiffer>
    <experiments>2</experiments>
</comment>
<comment type="subcellular location">
    <subcellularLocation>
        <location evidence="1">Cytoplasm</location>
    </subcellularLocation>
</comment>
<comment type="similarity">
    <text evidence="1">Belongs to the thymidylate synthase family. Bacterial-type ThyA subfamily.</text>
</comment>
<proteinExistence type="evidence at protein level"/>